<evidence type="ECO:0000255" key="1"/>
<evidence type="ECO:0000256" key="2">
    <source>
        <dbReference type="SAM" id="MobiDB-lite"/>
    </source>
</evidence>
<evidence type="ECO:0000269" key="3">
    <source>
    </source>
</evidence>
<evidence type="ECO:0000269" key="4">
    <source>
    </source>
</evidence>
<evidence type="ECO:0000305" key="5"/>
<evidence type="ECO:0000305" key="6">
    <source>
    </source>
</evidence>
<evidence type="ECO:0007744" key="7">
    <source>
    </source>
</evidence>
<comment type="subunit">
    <text evidence="4">Interacts with YIPF6; this interaction may stabilize YIPF2. May also form a ternary complex with YIPF1 and YIPF6.</text>
</comment>
<comment type="interaction">
    <interactant intactId="EBI-751204">
        <id>Q9BWQ6</id>
    </interactant>
    <interactant intactId="EBI-698810">
        <id>P62736</id>
        <label>ACTA2</label>
    </interactant>
    <organismsDiffer>false</organismsDiffer>
    <experiments>2</experiments>
</comment>
<comment type="interaction">
    <interactant intactId="EBI-751204">
        <id>Q9BWQ6</id>
    </interactant>
    <interactant intactId="EBI-13059134">
        <id>Q13520</id>
        <label>AQP6</label>
    </interactant>
    <organismsDiffer>false</organismsDiffer>
    <experiments>3</experiments>
</comment>
<comment type="interaction">
    <interactant intactId="EBI-751204">
        <id>Q9BWQ6</id>
    </interactant>
    <interactant intactId="EBI-781551">
        <id>Q9Y282</id>
        <label>ERGIC3</label>
    </interactant>
    <organismsDiffer>false</organismsDiffer>
    <experiments>3</experiments>
</comment>
<comment type="interaction">
    <interactant intactId="EBI-751204">
        <id>Q9BWQ6</id>
    </interactant>
    <interactant intactId="EBI-2833872">
        <id>O15552</id>
        <label>FFAR2</label>
    </interactant>
    <organismsDiffer>false</organismsDiffer>
    <experiments>3</experiments>
</comment>
<comment type="interaction">
    <interactant intactId="EBI-751204">
        <id>Q9BWQ6</id>
    </interactant>
    <interactant intactId="EBI-18076404">
        <id>O15529</id>
        <label>GPR42</label>
    </interactant>
    <organismsDiffer>false</organismsDiffer>
    <experiments>3</experiments>
</comment>
<comment type="interaction">
    <interactant intactId="EBI-751204">
        <id>Q9BWQ6</id>
    </interactant>
    <interactant intactId="EBI-18053395">
        <id>Q7Z5P4</id>
        <label>HSD17B13</label>
    </interactant>
    <organismsDiffer>false</organismsDiffer>
    <experiments>3</experiments>
</comment>
<comment type="interaction">
    <interactant intactId="EBI-751204">
        <id>Q9BWQ6</id>
    </interactant>
    <interactant intactId="EBI-750776">
        <id>O95214</id>
        <label>LEPROTL1</label>
    </interactant>
    <organismsDiffer>false</organismsDiffer>
    <experiments>3</experiments>
</comment>
<comment type="interaction">
    <interactant intactId="EBI-751204">
        <id>Q9BWQ6</id>
    </interactant>
    <interactant intactId="EBI-373355">
        <id>Q5SR56</id>
        <label>MFSD14B</label>
    </interactant>
    <organismsDiffer>false</organismsDiffer>
    <experiments>3</experiments>
</comment>
<comment type="interaction">
    <interactant intactId="EBI-751204">
        <id>Q9BWQ6</id>
    </interactant>
    <interactant intactId="EBI-1050125">
        <id>O15173</id>
        <label>PGRMC2</label>
    </interactant>
    <organismsDiffer>false</organismsDiffer>
    <experiments>3</experiments>
</comment>
<comment type="interaction">
    <interactant intactId="EBI-751204">
        <id>Q9BWQ6</id>
    </interactant>
    <interactant intactId="EBI-2340249">
        <id>Q96GF1</id>
        <label>RNF185</label>
    </interactant>
    <organismsDiffer>false</organismsDiffer>
    <experiments>6</experiments>
</comment>
<comment type="interaction">
    <interactant intactId="EBI-751204">
        <id>Q9BWQ6</id>
    </interactant>
    <interactant intactId="EBI-348482">
        <id>Q99942</id>
        <label>RNF5</label>
    </interactant>
    <organismsDiffer>false</organismsDiffer>
    <experiments>6</experiments>
</comment>
<comment type="interaction">
    <interactant intactId="EBI-751204">
        <id>Q9BWQ6</id>
    </interactant>
    <interactant intactId="EBI-18396772">
        <id>Q6UWV7</id>
        <label>SHISAL2A</label>
    </interactant>
    <organismsDiffer>false</organismsDiffer>
    <experiments>3</experiments>
</comment>
<comment type="interaction">
    <interactant intactId="EBI-751204">
        <id>Q9BWQ6</id>
    </interactant>
    <interactant intactId="EBI-18159983">
        <id>Q3KNW5</id>
        <label>SLC10A6</label>
    </interactant>
    <organismsDiffer>false</organismsDiffer>
    <experiments>3</experiments>
</comment>
<comment type="interaction">
    <interactant intactId="EBI-751204">
        <id>Q9BWQ6</id>
    </interactant>
    <interactant intactId="EBI-8644112">
        <id>Q9BRI3</id>
        <label>SLC30A2</label>
    </interactant>
    <organismsDiffer>false</organismsDiffer>
    <experiments>3</experiments>
</comment>
<comment type="interaction">
    <interactant intactId="EBI-751204">
        <id>Q9BWQ6</id>
    </interactant>
    <interactant intactId="EBI-17714201">
        <id>Q9BRY0-2</id>
        <label>SLC39A3</label>
    </interactant>
    <organismsDiffer>false</organismsDiffer>
    <experiments>3</experiments>
</comment>
<comment type="interaction">
    <interactant intactId="EBI-751204">
        <id>Q9BWQ6</id>
    </interactant>
    <interactant intactId="EBI-2800345">
        <id>Q86WV6</id>
        <label>STING1</label>
    </interactant>
    <organismsDiffer>false</organismsDiffer>
    <experiments>3</experiments>
</comment>
<comment type="interaction">
    <interactant intactId="EBI-751204">
        <id>Q9BWQ6</id>
    </interactant>
    <interactant intactId="EBI-18196631">
        <id>Q5VXT5-2</id>
        <label>SYPL2</label>
    </interactant>
    <organismsDiffer>false</organismsDiffer>
    <experiments>3</experiments>
</comment>
<comment type="interaction">
    <interactant intactId="EBI-751204">
        <id>Q9BWQ6</id>
    </interactant>
    <interactant intactId="EBI-13342951">
        <id>Q96AN5</id>
        <label>TMEM143</label>
    </interactant>
    <organismsDiffer>false</organismsDiffer>
    <experiments>3</experiments>
</comment>
<comment type="interaction">
    <interactant intactId="EBI-751204">
        <id>Q9BWQ6</id>
    </interactant>
    <interactant intactId="EBI-8638294">
        <id>Q9NUH8</id>
        <label>TMEM14B</label>
    </interactant>
    <organismsDiffer>false</organismsDiffer>
    <experiments>3</experiments>
</comment>
<comment type="interaction">
    <interactant intactId="EBI-751204">
        <id>Q9BWQ6</id>
    </interactant>
    <interactant intactId="EBI-6447886">
        <id>Q9Y320</id>
        <label>TMX2</label>
    </interactant>
    <organismsDiffer>false</organismsDiffer>
    <experiments>3</experiments>
</comment>
<comment type="interaction">
    <interactant intactId="EBI-751204">
        <id>Q9BWQ6</id>
    </interactant>
    <interactant intactId="EBI-11343401">
        <id>Q9NYZ1</id>
        <label>TVP23B</label>
    </interactant>
    <organismsDiffer>false</organismsDiffer>
    <experiments>3</experiments>
</comment>
<comment type="interaction">
    <interactant intactId="EBI-751204">
        <id>Q9BWQ6</id>
    </interactant>
    <interactant intactId="EBI-751210">
        <id>Q96EC8</id>
        <label>YIPF6</label>
    </interactant>
    <organismsDiffer>false</organismsDiffer>
    <experiments>9</experiments>
</comment>
<comment type="subcellular location">
    <subcellularLocation>
        <location evidence="3">Golgi apparatus</location>
        <location evidence="3">cis-Golgi network membrane</location>
        <topology evidence="5">Multi-pass membrane protein</topology>
    </subcellularLocation>
    <subcellularLocation>
        <location evidence="3">Golgi apparatus</location>
        <location evidence="3">trans-Golgi network membrane</location>
    </subcellularLocation>
    <subcellularLocation>
        <location evidence="3">Late endosome membrane</location>
    </subcellularLocation>
    <text evidence="3 4">Mainly localizes within medial-/trans-Golgi and trans-Golgi network (TGN), while less so within cis-Golgi.</text>
</comment>
<comment type="similarity">
    <text evidence="5">Belongs to the YIP1 family.</text>
</comment>
<organism>
    <name type="scientific">Homo sapiens</name>
    <name type="common">Human</name>
    <dbReference type="NCBI Taxonomy" id="9606"/>
    <lineage>
        <taxon>Eukaryota</taxon>
        <taxon>Metazoa</taxon>
        <taxon>Chordata</taxon>
        <taxon>Craniata</taxon>
        <taxon>Vertebrata</taxon>
        <taxon>Euteleostomi</taxon>
        <taxon>Mammalia</taxon>
        <taxon>Eutheria</taxon>
        <taxon>Euarchontoglires</taxon>
        <taxon>Primates</taxon>
        <taxon>Haplorrhini</taxon>
        <taxon>Catarrhini</taxon>
        <taxon>Hominidae</taxon>
        <taxon>Homo</taxon>
    </lineage>
</organism>
<dbReference type="EMBL" id="BC000056">
    <property type="protein sequence ID" value="AAH00056.1"/>
    <property type="molecule type" value="mRNA"/>
</dbReference>
<dbReference type="EMBL" id="BC013014">
    <property type="protein sequence ID" value="AAH13014.1"/>
    <property type="molecule type" value="mRNA"/>
</dbReference>
<dbReference type="CCDS" id="CCDS12251.1"/>
<dbReference type="RefSeq" id="NP_001308368.1">
    <property type="nucleotide sequence ID" value="NM_001321439.2"/>
</dbReference>
<dbReference type="RefSeq" id="NP_076934.1">
    <property type="nucleotide sequence ID" value="NM_024029.5"/>
</dbReference>
<dbReference type="RefSeq" id="XP_011526572.1">
    <property type="nucleotide sequence ID" value="XM_011528270.3"/>
</dbReference>
<dbReference type="RefSeq" id="XP_024307467.1">
    <property type="nucleotide sequence ID" value="XM_024451699.2"/>
</dbReference>
<dbReference type="RefSeq" id="XP_054178028.1">
    <property type="nucleotide sequence ID" value="XM_054322053.1"/>
</dbReference>
<dbReference type="RefSeq" id="XP_054178029.1">
    <property type="nucleotide sequence ID" value="XM_054322054.1"/>
</dbReference>
<dbReference type="SMR" id="Q9BWQ6"/>
<dbReference type="BioGRID" id="122463">
    <property type="interactions" value="30"/>
</dbReference>
<dbReference type="FunCoup" id="Q9BWQ6">
    <property type="interactions" value="1394"/>
</dbReference>
<dbReference type="IntAct" id="Q9BWQ6">
    <property type="interactions" value="28"/>
</dbReference>
<dbReference type="MINT" id="Q9BWQ6"/>
<dbReference type="STRING" id="9606.ENSP00000253031"/>
<dbReference type="TCDB" id="9.B.135.2.7">
    <property type="family name" value="the membrane trafficking yip (yip) family"/>
</dbReference>
<dbReference type="iPTMnet" id="Q9BWQ6"/>
<dbReference type="PhosphoSitePlus" id="Q9BWQ6"/>
<dbReference type="SwissPalm" id="Q9BWQ6"/>
<dbReference type="BioMuta" id="YIPF2"/>
<dbReference type="DMDM" id="74733454"/>
<dbReference type="jPOST" id="Q9BWQ6"/>
<dbReference type="MassIVE" id="Q9BWQ6"/>
<dbReference type="PaxDb" id="9606-ENSP00000253031"/>
<dbReference type="PeptideAtlas" id="Q9BWQ6"/>
<dbReference type="ProteomicsDB" id="79304"/>
<dbReference type="Pumba" id="Q9BWQ6"/>
<dbReference type="Antibodypedia" id="13058">
    <property type="antibodies" value="26 antibodies from 14 providers"/>
</dbReference>
<dbReference type="DNASU" id="78992"/>
<dbReference type="Ensembl" id="ENST00000253031.6">
    <property type="protein sequence ID" value="ENSP00000253031.1"/>
    <property type="gene ID" value="ENSG00000130733.11"/>
</dbReference>
<dbReference type="Ensembl" id="ENST00000586748.6">
    <property type="protein sequence ID" value="ENSP00000466055.1"/>
    <property type="gene ID" value="ENSG00000130733.11"/>
</dbReference>
<dbReference type="GeneID" id="78992"/>
<dbReference type="KEGG" id="hsa:78992"/>
<dbReference type="MANE-Select" id="ENST00000586748.6">
    <property type="protein sequence ID" value="ENSP00000466055.1"/>
    <property type="RefSeq nucleotide sequence ID" value="NM_001321439.2"/>
    <property type="RefSeq protein sequence ID" value="NP_001308368.1"/>
</dbReference>
<dbReference type="UCSC" id="uc002mqb.4">
    <property type="organism name" value="human"/>
</dbReference>
<dbReference type="AGR" id="HGNC:28476"/>
<dbReference type="CTD" id="78992"/>
<dbReference type="DisGeNET" id="78992"/>
<dbReference type="GeneCards" id="YIPF2"/>
<dbReference type="HGNC" id="HGNC:28476">
    <property type="gene designation" value="YIPF2"/>
</dbReference>
<dbReference type="HPA" id="ENSG00000130733">
    <property type="expression patterns" value="Low tissue specificity"/>
</dbReference>
<dbReference type="MIM" id="617522">
    <property type="type" value="gene"/>
</dbReference>
<dbReference type="neXtProt" id="NX_Q9BWQ6"/>
<dbReference type="OpenTargets" id="ENSG00000130733"/>
<dbReference type="PharmGKB" id="PA142670556"/>
<dbReference type="VEuPathDB" id="HostDB:ENSG00000130733"/>
<dbReference type="eggNOG" id="KOG3114">
    <property type="taxonomic scope" value="Eukaryota"/>
</dbReference>
<dbReference type="GeneTree" id="ENSGT00390000010157"/>
<dbReference type="InParanoid" id="Q9BWQ6"/>
<dbReference type="OMA" id="PIWISVT"/>
<dbReference type="OrthoDB" id="10256463at2759"/>
<dbReference type="PAN-GO" id="Q9BWQ6">
    <property type="GO annotations" value="1 GO annotation based on evolutionary models"/>
</dbReference>
<dbReference type="PhylomeDB" id="Q9BWQ6"/>
<dbReference type="PathwayCommons" id="Q9BWQ6"/>
<dbReference type="SignaLink" id="Q9BWQ6"/>
<dbReference type="BioGRID-ORCS" id="78992">
    <property type="hits" value="29 hits in 1156 CRISPR screens"/>
</dbReference>
<dbReference type="ChiTaRS" id="YIPF2">
    <property type="organism name" value="human"/>
</dbReference>
<dbReference type="GenomeRNAi" id="78992"/>
<dbReference type="Pharos" id="Q9BWQ6">
    <property type="development level" value="Tdark"/>
</dbReference>
<dbReference type="PRO" id="PR:Q9BWQ6"/>
<dbReference type="Proteomes" id="UP000005640">
    <property type="component" value="Chromosome 19"/>
</dbReference>
<dbReference type="RNAct" id="Q9BWQ6">
    <property type="molecule type" value="protein"/>
</dbReference>
<dbReference type="Bgee" id="ENSG00000130733">
    <property type="expression patterns" value="Expressed in type B pancreatic cell and 193 other cell types or tissues"/>
</dbReference>
<dbReference type="ExpressionAtlas" id="Q9BWQ6">
    <property type="expression patterns" value="baseline and differential"/>
</dbReference>
<dbReference type="GO" id="GO:0005794">
    <property type="term" value="C:Golgi apparatus"/>
    <property type="evidence" value="ECO:0000318"/>
    <property type="project" value="GO_Central"/>
</dbReference>
<dbReference type="GO" id="GO:0005797">
    <property type="term" value="C:Golgi medial cisterna"/>
    <property type="evidence" value="ECO:0000314"/>
    <property type="project" value="UniProtKB"/>
</dbReference>
<dbReference type="GO" id="GO:0000138">
    <property type="term" value="C:Golgi trans cisterna"/>
    <property type="evidence" value="ECO:0000314"/>
    <property type="project" value="UniProtKB"/>
</dbReference>
<dbReference type="GO" id="GO:0031902">
    <property type="term" value="C:late endosome membrane"/>
    <property type="evidence" value="ECO:0007669"/>
    <property type="project" value="UniProtKB-SubCell"/>
</dbReference>
<dbReference type="GO" id="GO:0005802">
    <property type="term" value="C:trans-Golgi network"/>
    <property type="evidence" value="ECO:0000314"/>
    <property type="project" value="UniProtKB"/>
</dbReference>
<dbReference type="GO" id="GO:0030133">
    <property type="term" value="C:transport vesicle"/>
    <property type="evidence" value="ECO:0000314"/>
    <property type="project" value="LIFEdb"/>
</dbReference>
<dbReference type="GO" id="GO:0031267">
    <property type="term" value="F:small GTPase binding"/>
    <property type="evidence" value="ECO:0007669"/>
    <property type="project" value="InterPro"/>
</dbReference>
<dbReference type="GO" id="GO:0016192">
    <property type="term" value="P:vesicle-mediated transport"/>
    <property type="evidence" value="ECO:0007669"/>
    <property type="project" value="InterPro"/>
</dbReference>
<dbReference type="InterPro" id="IPR006977">
    <property type="entry name" value="Yip1_dom"/>
</dbReference>
<dbReference type="InterPro" id="IPR039765">
    <property type="entry name" value="Yip5/YIPF1/YIPF2"/>
</dbReference>
<dbReference type="PANTHER" id="PTHR12822">
    <property type="entry name" value="PROTEIN YIPF"/>
    <property type="match status" value="1"/>
</dbReference>
<dbReference type="PANTHER" id="PTHR12822:SF3">
    <property type="entry name" value="PROTEIN YIPF2"/>
    <property type="match status" value="1"/>
</dbReference>
<dbReference type="Pfam" id="PF04893">
    <property type="entry name" value="Yip1"/>
    <property type="match status" value="1"/>
</dbReference>
<name>YIPF2_HUMAN</name>
<keyword id="KW-0007">Acetylation</keyword>
<keyword id="KW-0967">Endosome</keyword>
<keyword id="KW-0333">Golgi apparatus</keyword>
<keyword id="KW-0472">Membrane</keyword>
<keyword id="KW-1267">Proteomics identification</keyword>
<keyword id="KW-1185">Reference proteome</keyword>
<keyword id="KW-0812">Transmembrane</keyword>
<keyword id="KW-1133">Transmembrane helix</keyword>
<protein>
    <recommendedName>
        <fullName>Protein YIPF2</fullName>
    </recommendedName>
    <alternativeName>
        <fullName>YIP1 family member 2</fullName>
    </alternativeName>
</protein>
<reference key="1">
    <citation type="journal article" date="2004" name="Genome Res.">
        <title>The status, quality, and expansion of the NIH full-length cDNA project: the Mammalian Gene Collection (MGC).</title>
        <authorList>
            <consortium name="The MGC Project Team"/>
        </authorList>
    </citation>
    <scope>NUCLEOTIDE SEQUENCE [LARGE SCALE MRNA]</scope>
    <source>
        <tissue>Renal cell carcinoma</tissue>
        <tissue>Rhabdomyosarcoma</tissue>
    </source>
</reference>
<reference key="2">
    <citation type="journal article" date="2012" name="Proc. Natl. Acad. Sci. U.S.A.">
        <title>N-terminal acetylome analyses and functional insights of the N-terminal acetyltransferase NatB.</title>
        <authorList>
            <person name="Van Damme P."/>
            <person name="Lasa M."/>
            <person name="Polevoda B."/>
            <person name="Gazquez C."/>
            <person name="Elosegui-Artola A."/>
            <person name="Kim D.S."/>
            <person name="De Juan-Pardo E."/>
            <person name="Demeyer K."/>
            <person name="Hole K."/>
            <person name="Larrea E."/>
            <person name="Timmerman E."/>
            <person name="Prieto J."/>
            <person name="Arnesen T."/>
            <person name="Sherman F."/>
            <person name="Gevaert K."/>
            <person name="Aldabe R."/>
        </authorList>
    </citation>
    <scope>ACETYLATION [LARGE SCALE ANALYSIS] AT ALA-2</scope>
    <scope>CLEAVAGE OF INITIATOR METHIONINE [LARGE SCALE ANALYSIS]</scope>
    <scope>IDENTIFICATION BY MASS SPECTROMETRY [LARGE SCALE ANALYSIS]</scope>
</reference>
<reference key="3">
    <citation type="journal article" date="2017" name="Exp. Cell Res.">
        <title>YIPF1, YIPF2, and YIPF6 are medial-/trans-Golgi and trans-Golgi network-localized Yip domain family proteins, which play a role in the Golgi reassembly and glycan synthesis.</title>
        <authorList>
            <person name="Soonthornsit J."/>
            <person name="Sakai N."/>
            <person name="Sasaki Y."/>
            <person name="Watanabe R."/>
            <person name="Osako S."/>
            <person name="Nakamura N."/>
        </authorList>
    </citation>
    <scope>SUBCELLULAR LOCATION</scope>
    <scope>INTERACTION WITH YIPF1 AND YIPF6</scope>
</reference>
<reference key="4">
    <citation type="journal article" date="2017" name="Histochem. Cell Biol.">
        <title>Functional characterisation of the YIPF protein family in mammalian cells.</title>
        <authorList>
            <person name="Kranjc T."/>
            <person name="Dempsey E."/>
            <person name="Cagney G."/>
            <person name="Nakamura N."/>
            <person name="Shields D.C."/>
            <person name="Simpson J.C."/>
        </authorList>
    </citation>
    <scope>SUBCELLULAR LOCATION</scope>
    <scope>TOPOLOGY</scope>
</reference>
<feature type="initiator methionine" description="Removed" evidence="7">
    <location>
        <position position="1"/>
    </location>
</feature>
<feature type="chain" id="PRO_0000241454" description="Protein YIPF2">
    <location>
        <begin position="2"/>
        <end position="316"/>
    </location>
</feature>
<feature type="topological domain" description="Cytoplasmic" evidence="6">
    <location>
        <begin position="2"/>
        <end position="124"/>
    </location>
</feature>
<feature type="transmembrane region" description="Helical" evidence="1">
    <location>
        <begin position="125"/>
        <end position="145"/>
    </location>
</feature>
<feature type="topological domain" description="Lumenal" evidence="5">
    <location>
        <begin position="146"/>
        <end position="163"/>
    </location>
</feature>
<feature type="transmembrane region" description="Helical" evidence="1">
    <location>
        <begin position="164"/>
        <end position="184"/>
    </location>
</feature>
<feature type="topological domain" description="Cytoplasmic" evidence="5">
    <location>
        <begin position="185"/>
        <end position="196"/>
    </location>
</feature>
<feature type="transmembrane region" description="Helical" evidence="1">
    <location>
        <begin position="197"/>
        <end position="219"/>
    </location>
</feature>
<feature type="topological domain" description="Lumenal" evidence="5">
    <location>
        <begin position="220"/>
        <end position="231"/>
    </location>
</feature>
<feature type="transmembrane region" description="Helical" evidence="1">
    <location>
        <begin position="232"/>
        <end position="252"/>
    </location>
</feature>
<feature type="topological domain" description="Cytoplasmic" evidence="5">
    <location>
        <begin position="253"/>
        <end position="256"/>
    </location>
</feature>
<feature type="transmembrane region" description="Helical" evidence="1">
    <location>
        <begin position="257"/>
        <end position="277"/>
    </location>
</feature>
<feature type="topological domain" description="Lumenal" evidence="6">
    <location>
        <begin position="278"/>
        <end position="316"/>
    </location>
</feature>
<feature type="region of interest" description="Disordered" evidence="2">
    <location>
        <begin position="16"/>
        <end position="37"/>
    </location>
</feature>
<feature type="compositionally biased region" description="Polar residues" evidence="2">
    <location>
        <begin position="25"/>
        <end position="36"/>
    </location>
</feature>
<feature type="modified residue" description="N-acetylalanine" evidence="7">
    <location>
        <position position="2"/>
    </location>
</feature>
<accession>Q9BWQ6</accession>
<proteinExistence type="evidence at protein level"/>
<gene>
    <name type="primary">YIPF2</name>
</gene>
<sequence length="316" mass="35151">MASADELTFHEFEEATNLLADTPDAATTSRSDQLTPQGHVAVAVGSGGSYGAEDEVEEESDKAALLQEQQQQQQPGFWTFSYYQSFFDVDTSQVLDRIKGSLLPRPGHNFVRHHLRNRPDLYGPFWICATLAFVLAVTGNLTLVLAQRRDPSIHYSPQFHKVTVAGISIYCYAWLVPLALWGFLRWRKGVQERMGPYTFLETVCIYGYSLFVFIPMVVLWLIPVPWLQWLFGALALGLSAAGLVFTLWPVVREDTRLVATVLLSVVVLLHALLAMGCKLYFFQSLPPENVAPPPQITSLPSNIALSPTLPQSLAPS</sequence>